<gene>
    <name type="primary">nuoE</name>
    <name type="ordered locus">aq_574</name>
</gene>
<organism>
    <name type="scientific">Aquifex aeolicus (strain VF5)</name>
    <dbReference type="NCBI Taxonomy" id="224324"/>
    <lineage>
        <taxon>Bacteria</taxon>
        <taxon>Pseudomonadati</taxon>
        <taxon>Aquificota</taxon>
        <taxon>Aquificia</taxon>
        <taxon>Aquificales</taxon>
        <taxon>Aquificaceae</taxon>
        <taxon>Aquifex</taxon>
    </lineage>
</organism>
<dbReference type="EC" id="7.1.1.-"/>
<dbReference type="EMBL" id="AE000657">
    <property type="protein sequence ID" value="AAC06799.1"/>
    <property type="molecule type" value="Genomic_DNA"/>
</dbReference>
<dbReference type="PIR" id="F70351">
    <property type="entry name" value="F70351"/>
</dbReference>
<dbReference type="RefSeq" id="NP_213402.1">
    <property type="nucleotide sequence ID" value="NC_000918.1"/>
</dbReference>
<dbReference type="RefSeq" id="WP_010880340.1">
    <property type="nucleotide sequence ID" value="NC_000918.1"/>
</dbReference>
<dbReference type="PDB" id="6HL2">
    <property type="method" value="X-ray"/>
    <property type="resolution" value="1.95 A"/>
    <property type="chains" value="A/C=1-160"/>
</dbReference>
<dbReference type="PDB" id="6HL3">
    <property type="method" value="X-ray"/>
    <property type="resolution" value="2.04 A"/>
    <property type="chains" value="A/C=1-160"/>
</dbReference>
<dbReference type="PDB" id="6HL4">
    <property type="method" value="X-ray"/>
    <property type="resolution" value="2.06 A"/>
    <property type="chains" value="A/C=1-160"/>
</dbReference>
<dbReference type="PDB" id="6HLA">
    <property type="method" value="X-ray"/>
    <property type="resolution" value="1.90 A"/>
    <property type="chains" value="A/C=1-160"/>
</dbReference>
<dbReference type="PDB" id="6HLI">
    <property type="method" value="X-ray"/>
    <property type="resolution" value="2.38 A"/>
    <property type="chains" value="A/C=1-160"/>
</dbReference>
<dbReference type="PDB" id="6HLJ">
    <property type="method" value="X-ray"/>
    <property type="resolution" value="2.10 A"/>
    <property type="chains" value="A/C=1-160"/>
</dbReference>
<dbReference type="PDB" id="6HLM">
    <property type="method" value="X-ray"/>
    <property type="resolution" value="1.80 A"/>
    <property type="chains" value="A/C=1-160"/>
</dbReference>
<dbReference type="PDB" id="6Q9C">
    <property type="method" value="X-ray"/>
    <property type="resolution" value="1.78 A"/>
    <property type="chains" value="A/C=6-160"/>
</dbReference>
<dbReference type="PDB" id="6Q9G">
    <property type="method" value="X-ray"/>
    <property type="resolution" value="2.10 A"/>
    <property type="chains" value="A/C=1-160"/>
</dbReference>
<dbReference type="PDB" id="6Q9J">
    <property type="method" value="X-ray"/>
    <property type="resolution" value="1.83 A"/>
    <property type="chains" value="A/C=1-160"/>
</dbReference>
<dbReference type="PDB" id="6Q9K">
    <property type="method" value="X-ray"/>
    <property type="resolution" value="1.99 A"/>
    <property type="chains" value="A/C=6-160"/>
</dbReference>
<dbReference type="PDB" id="6R7P">
    <property type="method" value="X-ray"/>
    <property type="resolution" value="3.22 A"/>
    <property type="chains" value="A/C=1-160"/>
</dbReference>
<dbReference type="PDB" id="6SAQ">
    <property type="method" value="X-ray"/>
    <property type="resolution" value="2.02 A"/>
    <property type="chains" value="A/C=1-160"/>
</dbReference>
<dbReference type="PDB" id="7Q5Y">
    <property type="method" value="X-ray"/>
    <property type="resolution" value="2.70 A"/>
    <property type="chains" value="E/K/Q/W=1-160"/>
</dbReference>
<dbReference type="PDB" id="8QG1">
    <property type="method" value="X-ray"/>
    <property type="resolution" value="2.00 A"/>
    <property type="chains" value="A/C=1-160"/>
</dbReference>
<dbReference type="PDB" id="8QGW">
    <property type="method" value="X-ray"/>
    <property type="resolution" value="1.60 A"/>
    <property type="chains" value="A/C=1-160"/>
</dbReference>
<dbReference type="PDB" id="8QH4">
    <property type="method" value="X-ray"/>
    <property type="resolution" value="1.96 A"/>
    <property type="chains" value="A/C=1-160"/>
</dbReference>
<dbReference type="PDB" id="8QH7">
    <property type="method" value="X-ray"/>
    <property type="resolution" value="1.85 A"/>
    <property type="chains" value="A/C=1-160"/>
</dbReference>
<dbReference type="PDB" id="8QHK">
    <property type="method" value="X-ray"/>
    <property type="resolution" value="1.95 A"/>
    <property type="chains" value="A/C=1-160"/>
</dbReference>
<dbReference type="PDB" id="9FDJ">
    <property type="method" value="X-ray"/>
    <property type="resolution" value="1.70 A"/>
    <property type="chains" value="A/C=1-160"/>
</dbReference>
<dbReference type="PDB" id="9FDK">
    <property type="method" value="X-ray"/>
    <property type="resolution" value="1.80 A"/>
    <property type="chains" value="A/C=1-160"/>
</dbReference>
<dbReference type="PDB" id="9FDV">
    <property type="method" value="X-ray"/>
    <property type="resolution" value="1.99 A"/>
    <property type="chains" value="A/C=1-160"/>
</dbReference>
<dbReference type="PDB" id="9FE0">
    <property type="method" value="X-ray"/>
    <property type="resolution" value="2.20 A"/>
    <property type="chains" value="A/C=1-160"/>
</dbReference>
<dbReference type="PDB" id="9FE5">
    <property type="method" value="X-ray"/>
    <property type="resolution" value="2.10 A"/>
    <property type="chains" value="A/C=1-160"/>
</dbReference>
<dbReference type="PDB" id="9FE7">
    <property type="method" value="X-ray"/>
    <property type="resolution" value="2.28 A"/>
    <property type="chains" value="A/C=1-160"/>
</dbReference>
<dbReference type="PDB" id="9FE8">
    <property type="method" value="X-ray"/>
    <property type="resolution" value="2.34 A"/>
    <property type="chains" value="A/C=1-160"/>
</dbReference>
<dbReference type="PDB" id="9FEA">
    <property type="method" value="X-ray"/>
    <property type="resolution" value="1.66 A"/>
    <property type="chains" value="A/C=1-160"/>
</dbReference>
<dbReference type="PDB" id="9FIF">
    <property type="method" value="X-ray"/>
    <property type="resolution" value="1.77 A"/>
    <property type="chains" value="A/C=1-160"/>
</dbReference>
<dbReference type="PDB" id="9FIH">
    <property type="method" value="X-ray"/>
    <property type="resolution" value="2.08 A"/>
    <property type="chains" value="A/C=1-160"/>
</dbReference>
<dbReference type="PDB" id="9FII">
    <property type="method" value="X-ray"/>
    <property type="resolution" value="2.50 A"/>
    <property type="chains" value="A/C=1-160"/>
</dbReference>
<dbReference type="PDB" id="9FIJ">
    <property type="method" value="X-ray"/>
    <property type="resolution" value="2.35 A"/>
    <property type="chains" value="A/C=1-160"/>
</dbReference>
<dbReference type="PDB" id="9FIL">
    <property type="method" value="X-ray"/>
    <property type="resolution" value="2.54 A"/>
    <property type="chains" value="A/C=1-160"/>
</dbReference>
<dbReference type="PDBsum" id="6HL2"/>
<dbReference type="PDBsum" id="6HL3"/>
<dbReference type="PDBsum" id="6HL4"/>
<dbReference type="PDBsum" id="6HLA"/>
<dbReference type="PDBsum" id="6HLI"/>
<dbReference type="PDBsum" id="6HLJ"/>
<dbReference type="PDBsum" id="6HLM"/>
<dbReference type="PDBsum" id="6Q9C"/>
<dbReference type="PDBsum" id="6Q9G"/>
<dbReference type="PDBsum" id="6Q9J"/>
<dbReference type="PDBsum" id="6Q9K"/>
<dbReference type="PDBsum" id="6R7P"/>
<dbReference type="PDBsum" id="6SAQ"/>
<dbReference type="PDBsum" id="7Q5Y"/>
<dbReference type="PDBsum" id="8QG1"/>
<dbReference type="PDBsum" id="8QGW"/>
<dbReference type="PDBsum" id="8QH4"/>
<dbReference type="PDBsum" id="8QH7"/>
<dbReference type="PDBsum" id="8QHK"/>
<dbReference type="PDBsum" id="9FDJ"/>
<dbReference type="PDBsum" id="9FDK"/>
<dbReference type="PDBsum" id="9FDV"/>
<dbReference type="PDBsum" id="9FE0"/>
<dbReference type="PDBsum" id="9FE5"/>
<dbReference type="PDBsum" id="9FE7"/>
<dbReference type="PDBsum" id="9FE8"/>
<dbReference type="PDBsum" id="9FEA"/>
<dbReference type="PDBsum" id="9FIF"/>
<dbReference type="PDBsum" id="9FIH"/>
<dbReference type="PDBsum" id="9FII"/>
<dbReference type="PDBsum" id="9FIJ"/>
<dbReference type="PDBsum" id="9FIL"/>
<dbReference type="SMR" id="O66842"/>
<dbReference type="FunCoup" id="O66842">
    <property type="interactions" value="350"/>
</dbReference>
<dbReference type="STRING" id="224324.aq_574"/>
<dbReference type="EnsemblBacteria" id="AAC06799">
    <property type="protein sequence ID" value="AAC06799"/>
    <property type="gene ID" value="aq_574"/>
</dbReference>
<dbReference type="KEGG" id="aae:aq_574"/>
<dbReference type="eggNOG" id="COG1905">
    <property type="taxonomic scope" value="Bacteria"/>
</dbReference>
<dbReference type="HOGENOM" id="CLU_054362_2_1_0"/>
<dbReference type="InParanoid" id="O66842"/>
<dbReference type="OrthoDB" id="9807941at2"/>
<dbReference type="Proteomes" id="UP000000798">
    <property type="component" value="Chromosome"/>
</dbReference>
<dbReference type="GO" id="GO:0051537">
    <property type="term" value="F:2 iron, 2 sulfur cluster binding"/>
    <property type="evidence" value="ECO:0007669"/>
    <property type="project" value="UniProtKB-KW"/>
</dbReference>
<dbReference type="GO" id="GO:0046872">
    <property type="term" value="F:metal ion binding"/>
    <property type="evidence" value="ECO:0007669"/>
    <property type="project" value="UniProtKB-KW"/>
</dbReference>
<dbReference type="GO" id="GO:0016491">
    <property type="term" value="F:oxidoreductase activity"/>
    <property type="evidence" value="ECO:0007669"/>
    <property type="project" value="InterPro"/>
</dbReference>
<dbReference type="GO" id="GO:0048038">
    <property type="term" value="F:quinone binding"/>
    <property type="evidence" value="ECO:0007669"/>
    <property type="project" value="UniProtKB-KW"/>
</dbReference>
<dbReference type="GO" id="GO:0022904">
    <property type="term" value="P:respiratory electron transport chain"/>
    <property type="evidence" value="ECO:0000318"/>
    <property type="project" value="GO_Central"/>
</dbReference>
<dbReference type="CDD" id="cd03064">
    <property type="entry name" value="TRX_Fd_NuoE"/>
    <property type="match status" value="1"/>
</dbReference>
<dbReference type="FunFam" id="1.10.10.1590:FF:000001">
    <property type="entry name" value="NADH-quinone oxidoreductase subunit E"/>
    <property type="match status" value="1"/>
</dbReference>
<dbReference type="FunFam" id="3.40.30.10:FF:000015">
    <property type="entry name" value="NADH-quinone oxidoreductase subunit E"/>
    <property type="match status" value="1"/>
</dbReference>
<dbReference type="Gene3D" id="3.40.30.10">
    <property type="entry name" value="Glutaredoxin"/>
    <property type="match status" value="1"/>
</dbReference>
<dbReference type="Gene3D" id="1.10.10.1590">
    <property type="entry name" value="NADH-quinone oxidoreductase subunit E"/>
    <property type="match status" value="1"/>
</dbReference>
<dbReference type="InterPro" id="IPR002023">
    <property type="entry name" value="NuoE-like"/>
</dbReference>
<dbReference type="InterPro" id="IPR042128">
    <property type="entry name" value="NuoE_dom"/>
</dbReference>
<dbReference type="InterPro" id="IPR041921">
    <property type="entry name" value="NuoE_N"/>
</dbReference>
<dbReference type="InterPro" id="IPR036249">
    <property type="entry name" value="Thioredoxin-like_sf"/>
</dbReference>
<dbReference type="NCBIfam" id="TIGR01958">
    <property type="entry name" value="nuoE_fam"/>
    <property type="match status" value="1"/>
</dbReference>
<dbReference type="PANTHER" id="PTHR10371:SF3">
    <property type="entry name" value="NADH DEHYDROGENASE [UBIQUINONE] FLAVOPROTEIN 2, MITOCHONDRIAL"/>
    <property type="match status" value="1"/>
</dbReference>
<dbReference type="PANTHER" id="PTHR10371">
    <property type="entry name" value="NADH DEHYDROGENASE UBIQUINONE FLAVOPROTEIN 2, MITOCHONDRIAL"/>
    <property type="match status" value="1"/>
</dbReference>
<dbReference type="Pfam" id="PF01257">
    <property type="entry name" value="2Fe-2S_thioredx"/>
    <property type="match status" value="1"/>
</dbReference>
<dbReference type="PIRSF" id="PIRSF000216">
    <property type="entry name" value="NADH_DH_24kDa"/>
    <property type="match status" value="1"/>
</dbReference>
<dbReference type="SUPFAM" id="SSF52833">
    <property type="entry name" value="Thioredoxin-like"/>
    <property type="match status" value="1"/>
</dbReference>
<dbReference type="PROSITE" id="PS01099">
    <property type="entry name" value="COMPLEX1_24K"/>
    <property type="match status" value="1"/>
</dbReference>
<proteinExistence type="evidence at protein level"/>
<evidence type="ECO:0000250" key="1"/>
<evidence type="ECO:0000255" key="2"/>
<evidence type="ECO:0000305" key="3"/>
<evidence type="ECO:0007829" key="4">
    <source>
        <dbReference type="PDB" id="8QGW"/>
    </source>
</evidence>
<protein>
    <recommendedName>
        <fullName>NADH-quinone oxidoreductase subunit E</fullName>
        <ecNumber>7.1.1.-</ecNumber>
    </recommendedName>
    <alternativeName>
        <fullName>NADH dehydrogenase I subunit E</fullName>
    </alternativeName>
    <alternativeName>
        <fullName>NDH-1 subunit E</fullName>
    </alternativeName>
</protein>
<comment type="function">
    <text evidence="1">NDH-1 shuttles electrons from NADH, via FMN and iron-sulfur (Fe-S) centers, to quinones in the respiratory chain. Couples the redox reaction to proton translocation (for every two electrons transferred, four hydrogen ions are translocated across the cytoplasmic membrane), and thus conserves the redox energy in a proton gradient (By similarity).</text>
</comment>
<comment type="catalytic activity">
    <reaction>
        <text>a quinone + NADH + 5 H(+)(in) = a quinol + NAD(+) + 4 H(+)(out)</text>
        <dbReference type="Rhea" id="RHEA:57888"/>
        <dbReference type="ChEBI" id="CHEBI:15378"/>
        <dbReference type="ChEBI" id="CHEBI:24646"/>
        <dbReference type="ChEBI" id="CHEBI:57540"/>
        <dbReference type="ChEBI" id="CHEBI:57945"/>
        <dbReference type="ChEBI" id="CHEBI:132124"/>
    </reaction>
</comment>
<comment type="cofactor">
    <cofactor evidence="3">
        <name>[2Fe-2S] cluster</name>
        <dbReference type="ChEBI" id="CHEBI:190135"/>
    </cofactor>
    <text evidence="3">Binds 1 [2Fe-2S] cluster.</text>
</comment>
<comment type="similarity">
    <text evidence="3">Belongs to the complex I 24 kDa subunit family.</text>
</comment>
<sequence>MFKTEFEFPEELKTKLQEHINYFPKKRQAILLCLHEIQNYYGYIPPESLKPLADMLELPLNHVEGVVAFYDMFDREDKAKYRIRVCVSIVCHLMGTNKLLKALENILGIKPGEVTPDGKFKIVPVQCLGACSEAPVFMVNDDEYKFESEVQLNEILSRYT</sequence>
<reference key="1">
    <citation type="journal article" date="1998" name="Nature">
        <title>The complete genome of the hyperthermophilic bacterium Aquifex aeolicus.</title>
        <authorList>
            <person name="Deckert G."/>
            <person name="Warren P.V."/>
            <person name="Gaasterland T."/>
            <person name="Young W.G."/>
            <person name="Lenox A.L."/>
            <person name="Graham D.E."/>
            <person name="Overbeek R."/>
            <person name="Snead M.A."/>
            <person name="Keller M."/>
            <person name="Aujay M."/>
            <person name="Huber R."/>
            <person name="Feldman R.A."/>
            <person name="Short J.M."/>
            <person name="Olsen G.J."/>
            <person name="Swanson R.V."/>
        </authorList>
    </citation>
    <scope>NUCLEOTIDE SEQUENCE [LARGE SCALE GENOMIC DNA]</scope>
    <source>
        <strain>VF5</strain>
    </source>
</reference>
<name>NUOE_AQUAE</name>
<keyword id="KW-0001">2Fe-2S</keyword>
<keyword id="KW-0002">3D-structure</keyword>
<keyword id="KW-0408">Iron</keyword>
<keyword id="KW-0411">Iron-sulfur</keyword>
<keyword id="KW-0479">Metal-binding</keyword>
<keyword id="KW-0520">NAD</keyword>
<keyword id="KW-0874">Quinone</keyword>
<keyword id="KW-1185">Reference proteome</keyword>
<keyword id="KW-1278">Translocase</keyword>
<feature type="chain" id="PRO_0000118687" description="NADH-quinone oxidoreductase subunit E">
    <location>
        <begin position="1"/>
        <end position="160"/>
    </location>
</feature>
<feature type="binding site" evidence="2">
    <location>
        <position position="86"/>
    </location>
    <ligand>
        <name>[2Fe-2S] cluster</name>
        <dbReference type="ChEBI" id="CHEBI:190135"/>
    </ligand>
</feature>
<feature type="binding site" evidence="2">
    <location>
        <position position="91"/>
    </location>
    <ligand>
        <name>[2Fe-2S] cluster</name>
        <dbReference type="ChEBI" id="CHEBI:190135"/>
    </ligand>
</feature>
<feature type="binding site" evidence="2">
    <location>
        <position position="127"/>
    </location>
    <ligand>
        <name>[2Fe-2S] cluster</name>
        <dbReference type="ChEBI" id="CHEBI:190135"/>
    </ligand>
</feature>
<feature type="binding site" evidence="2">
    <location>
        <position position="131"/>
    </location>
    <ligand>
        <name>[2Fe-2S] cluster</name>
        <dbReference type="ChEBI" id="CHEBI:190135"/>
    </ligand>
</feature>
<feature type="helix" evidence="4">
    <location>
        <begin position="10"/>
        <end position="22"/>
    </location>
</feature>
<feature type="strand" evidence="4">
    <location>
        <begin position="23"/>
        <end position="25"/>
    </location>
</feature>
<feature type="helix" evidence="4">
    <location>
        <begin position="26"/>
        <end position="29"/>
    </location>
</feature>
<feature type="helix" evidence="4">
    <location>
        <begin position="30"/>
        <end position="41"/>
    </location>
</feature>
<feature type="helix" evidence="4">
    <location>
        <begin position="46"/>
        <end position="48"/>
    </location>
</feature>
<feature type="helix" evidence="4">
    <location>
        <begin position="49"/>
        <end position="56"/>
    </location>
</feature>
<feature type="helix" evidence="4">
    <location>
        <begin position="60"/>
        <end position="69"/>
    </location>
</feature>
<feature type="strand" evidence="4">
    <location>
        <begin position="80"/>
        <end position="86"/>
    </location>
</feature>
<feature type="helix" evidence="4">
    <location>
        <begin position="89"/>
        <end position="94"/>
    </location>
</feature>
<feature type="helix" evidence="4">
    <location>
        <begin position="96"/>
        <end position="107"/>
    </location>
</feature>
<feature type="strand" evidence="4">
    <location>
        <begin position="120"/>
        <end position="126"/>
    </location>
</feature>
<feature type="helix" evidence="4">
    <location>
        <begin position="131"/>
        <end position="133"/>
    </location>
</feature>
<feature type="strand" evidence="4">
    <location>
        <begin position="135"/>
        <end position="139"/>
    </location>
</feature>
<feature type="strand" evidence="4">
    <location>
        <begin position="142"/>
        <end position="145"/>
    </location>
</feature>
<feature type="helix" evidence="4">
    <location>
        <begin position="149"/>
        <end position="156"/>
    </location>
</feature>
<accession>O66842</accession>